<name>YLI2_SCHPO</name>
<protein>
    <recommendedName>
        <fullName>Uncharacterized protein C458.02c</fullName>
    </recommendedName>
</protein>
<gene>
    <name type="ORF">SPAC458.02c</name>
</gene>
<proteinExistence type="evidence at protein level"/>
<accession>Q9P3W6</accession>
<evidence type="ECO:0000255" key="1"/>
<evidence type="ECO:0000256" key="2">
    <source>
        <dbReference type="SAM" id="MobiDB-lite"/>
    </source>
</evidence>
<evidence type="ECO:0000269" key="3">
    <source>
    </source>
</evidence>
<evidence type="ECO:0000269" key="4">
    <source>
    </source>
</evidence>
<sequence length="468" mass="53736">MSSHKPVRPNEALHKEALEELDAKINEAKKRFNEHKEKLGAIRGGGSLQEKNAELRAELDNIRNAQAAIRSSKQTLINKVKAQDELLKKKVKELTAMKKTVPFKSEVELDKHVKQLQAAVDSGTLKIVDEKKYLREISQCNRTRKSFVELNALQTSIDTIRNELNELRDQLNDSESKKLSDKFVEIRSELDEVRKQQDGYYKDQRKLIAERDDEKTALDDLYNQRRALQREYDTQLRAFRTYEREQRAKRQEQFRLERENREKEKRRIAAQRKLEEASIPAFTEEILACENLLKVFHVPVESSTTNAVSTGNTSSKILKPRTLTPRTVDPIPEGTIIKKESSDDAMFSGLKKSKPKKSNKSNNNQADSDRLNLSFGTIKEFDFVGVPAPFTKSQVDSAVEQLKSRIAHFKEQQDSVTKQRIEKAKQEIEKLEAKYNSKEEKTLTEADMVISSEETVTVTNDLEVEATA</sequence>
<reference key="1">
    <citation type="journal article" date="2002" name="Nature">
        <title>The genome sequence of Schizosaccharomyces pombe.</title>
        <authorList>
            <person name="Wood V."/>
            <person name="Gwilliam R."/>
            <person name="Rajandream M.A."/>
            <person name="Lyne M.H."/>
            <person name="Lyne R."/>
            <person name="Stewart A."/>
            <person name="Sgouros J.G."/>
            <person name="Peat N."/>
            <person name="Hayles J."/>
            <person name="Baker S.G."/>
            <person name="Basham D."/>
            <person name="Bowman S."/>
            <person name="Brooks K."/>
            <person name="Brown D."/>
            <person name="Brown S."/>
            <person name="Chillingworth T."/>
            <person name="Churcher C.M."/>
            <person name="Collins M."/>
            <person name="Connor R."/>
            <person name="Cronin A."/>
            <person name="Davis P."/>
            <person name="Feltwell T."/>
            <person name="Fraser A."/>
            <person name="Gentles S."/>
            <person name="Goble A."/>
            <person name="Hamlin N."/>
            <person name="Harris D.E."/>
            <person name="Hidalgo J."/>
            <person name="Hodgson G."/>
            <person name="Holroyd S."/>
            <person name="Hornsby T."/>
            <person name="Howarth S."/>
            <person name="Huckle E.J."/>
            <person name="Hunt S."/>
            <person name="Jagels K."/>
            <person name="James K.D."/>
            <person name="Jones L."/>
            <person name="Jones M."/>
            <person name="Leather S."/>
            <person name="McDonald S."/>
            <person name="McLean J."/>
            <person name="Mooney P."/>
            <person name="Moule S."/>
            <person name="Mungall K.L."/>
            <person name="Murphy L.D."/>
            <person name="Niblett D."/>
            <person name="Odell C."/>
            <person name="Oliver K."/>
            <person name="O'Neil S."/>
            <person name="Pearson D."/>
            <person name="Quail M.A."/>
            <person name="Rabbinowitsch E."/>
            <person name="Rutherford K.M."/>
            <person name="Rutter S."/>
            <person name="Saunders D."/>
            <person name="Seeger K."/>
            <person name="Sharp S."/>
            <person name="Skelton J."/>
            <person name="Simmonds M.N."/>
            <person name="Squares R."/>
            <person name="Squares S."/>
            <person name="Stevens K."/>
            <person name="Taylor K."/>
            <person name="Taylor R.G."/>
            <person name="Tivey A."/>
            <person name="Walsh S.V."/>
            <person name="Warren T."/>
            <person name="Whitehead S."/>
            <person name="Woodward J.R."/>
            <person name="Volckaert G."/>
            <person name="Aert R."/>
            <person name="Robben J."/>
            <person name="Grymonprez B."/>
            <person name="Weltjens I."/>
            <person name="Vanstreels E."/>
            <person name="Rieger M."/>
            <person name="Schaefer M."/>
            <person name="Mueller-Auer S."/>
            <person name="Gabel C."/>
            <person name="Fuchs M."/>
            <person name="Duesterhoeft A."/>
            <person name="Fritzc C."/>
            <person name="Holzer E."/>
            <person name="Moestl D."/>
            <person name="Hilbert H."/>
            <person name="Borzym K."/>
            <person name="Langer I."/>
            <person name="Beck A."/>
            <person name="Lehrach H."/>
            <person name="Reinhardt R."/>
            <person name="Pohl T.M."/>
            <person name="Eger P."/>
            <person name="Zimmermann W."/>
            <person name="Wedler H."/>
            <person name="Wambutt R."/>
            <person name="Purnelle B."/>
            <person name="Goffeau A."/>
            <person name="Cadieu E."/>
            <person name="Dreano S."/>
            <person name="Gloux S."/>
            <person name="Lelaure V."/>
            <person name="Mottier S."/>
            <person name="Galibert F."/>
            <person name="Aves S.J."/>
            <person name="Xiang Z."/>
            <person name="Hunt C."/>
            <person name="Moore K."/>
            <person name="Hurst S.M."/>
            <person name="Lucas M."/>
            <person name="Rochet M."/>
            <person name="Gaillardin C."/>
            <person name="Tallada V.A."/>
            <person name="Garzon A."/>
            <person name="Thode G."/>
            <person name="Daga R.R."/>
            <person name="Cruzado L."/>
            <person name="Jimenez J."/>
            <person name="Sanchez M."/>
            <person name="del Rey F."/>
            <person name="Benito J."/>
            <person name="Dominguez A."/>
            <person name="Revuelta J.L."/>
            <person name="Moreno S."/>
            <person name="Armstrong J."/>
            <person name="Forsburg S.L."/>
            <person name="Cerutti L."/>
            <person name="Lowe T."/>
            <person name="McCombie W.R."/>
            <person name="Paulsen I."/>
            <person name="Potashkin J."/>
            <person name="Shpakovski G.V."/>
            <person name="Ussery D."/>
            <person name="Barrell B.G."/>
            <person name="Nurse P."/>
        </authorList>
    </citation>
    <scope>NUCLEOTIDE SEQUENCE [LARGE SCALE GENOMIC DNA]</scope>
    <source>
        <strain>972 / ATCC 24843</strain>
    </source>
</reference>
<reference key="2">
    <citation type="journal article" date="2006" name="Nat. Biotechnol.">
        <title>ORFeome cloning and global analysis of protein localization in the fission yeast Schizosaccharomyces pombe.</title>
        <authorList>
            <person name="Matsuyama A."/>
            <person name="Arai R."/>
            <person name="Yashiroda Y."/>
            <person name="Shirai A."/>
            <person name="Kamata A."/>
            <person name="Sekido S."/>
            <person name="Kobayashi Y."/>
            <person name="Hashimoto A."/>
            <person name="Hamamoto M."/>
            <person name="Hiraoka Y."/>
            <person name="Horinouchi S."/>
            <person name="Yoshida M."/>
        </authorList>
    </citation>
    <scope>SUBCELLULAR LOCATION [LARGE SCALE ANALYSIS]</scope>
</reference>
<reference key="3">
    <citation type="journal article" date="2008" name="J. Proteome Res.">
        <title>Phosphoproteome analysis of fission yeast.</title>
        <authorList>
            <person name="Wilson-Grady J.T."/>
            <person name="Villen J."/>
            <person name="Gygi S.P."/>
        </authorList>
    </citation>
    <scope>PHOSPHORYLATION [LARGE SCALE ANALYSIS] AT SER-342</scope>
    <scope>IDENTIFICATION BY MASS SPECTROMETRY</scope>
</reference>
<dbReference type="EMBL" id="CU329670">
    <property type="protein sequence ID" value="CAB93844.1"/>
    <property type="molecule type" value="Genomic_DNA"/>
</dbReference>
<dbReference type="RefSeq" id="NP_594696.1">
    <property type="nucleotide sequence ID" value="NM_001020124.2"/>
</dbReference>
<dbReference type="SMR" id="Q9P3W6"/>
<dbReference type="BioGRID" id="280045">
    <property type="interactions" value="16"/>
</dbReference>
<dbReference type="FunCoup" id="Q9P3W6">
    <property type="interactions" value="26"/>
</dbReference>
<dbReference type="STRING" id="284812.Q9P3W6"/>
<dbReference type="iPTMnet" id="Q9P3W6"/>
<dbReference type="PaxDb" id="4896-SPAC458.02c.1"/>
<dbReference type="EnsemblFungi" id="SPAC458.02c.1">
    <property type="protein sequence ID" value="SPAC458.02c.1:pep"/>
    <property type="gene ID" value="SPAC458.02c"/>
</dbReference>
<dbReference type="KEGG" id="spo:2543631"/>
<dbReference type="PomBase" id="SPAC458.02c"/>
<dbReference type="VEuPathDB" id="FungiDB:SPAC458.02c"/>
<dbReference type="eggNOG" id="ENOG502QRKP">
    <property type="taxonomic scope" value="Eukaryota"/>
</dbReference>
<dbReference type="HOGENOM" id="CLU_023943_1_0_1"/>
<dbReference type="InParanoid" id="Q9P3W6"/>
<dbReference type="OMA" id="AHWKEDQ"/>
<dbReference type="PhylomeDB" id="Q9P3W6"/>
<dbReference type="PRO" id="PR:Q9P3W6"/>
<dbReference type="Proteomes" id="UP000002485">
    <property type="component" value="Chromosome I"/>
</dbReference>
<dbReference type="GO" id="GO:0005829">
    <property type="term" value="C:cytosol"/>
    <property type="evidence" value="ECO:0007005"/>
    <property type="project" value="PomBase"/>
</dbReference>
<dbReference type="GO" id="GO:0005783">
    <property type="term" value="C:endoplasmic reticulum"/>
    <property type="evidence" value="ECO:0000318"/>
    <property type="project" value="GO_Central"/>
</dbReference>
<dbReference type="GO" id="GO:0042175">
    <property type="term" value="C:nuclear outer membrane-endoplasmic reticulum membrane network"/>
    <property type="evidence" value="ECO:0000318"/>
    <property type="project" value="GO_Central"/>
</dbReference>
<dbReference type="GO" id="GO:1990904">
    <property type="term" value="C:ribonucleoprotein complex"/>
    <property type="evidence" value="ECO:0000318"/>
    <property type="project" value="GO_Central"/>
</dbReference>
<dbReference type="GO" id="GO:0003729">
    <property type="term" value="F:mRNA binding"/>
    <property type="evidence" value="ECO:0000318"/>
    <property type="project" value="GO_Central"/>
</dbReference>
<dbReference type="GO" id="GO:0008298">
    <property type="term" value="P:intracellular mRNA localization"/>
    <property type="evidence" value="ECO:0000318"/>
    <property type="project" value="GO_Central"/>
</dbReference>
<dbReference type="GO" id="GO:0016071">
    <property type="term" value="P:mRNA metabolic process"/>
    <property type="evidence" value="ECO:0000266"/>
    <property type="project" value="PomBase"/>
</dbReference>
<dbReference type="InterPro" id="IPR039604">
    <property type="entry name" value="Bfr1"/>
</dbReference>
<dbReference type="PANTHER" id="PTHR31027:SF2">
    <property type="entry name" value="LEBERCILIN DOMAIN-CONTAINING PROTEIN"/>
    <property type="match status" value="1"/>
</dbReference>
<dbReference type="PANTHER" id="PTHR31027">
    <property type="entry name" value="NUCLEAR SEGREGATION PROTEIN BFR1"/>
    <property type="match status" value="1"/>
</dbReference>
<keyword id="KW-0175">Coiled coil</keyword>
<keyword id="KW-0963">Cytoplasm</keyword>
<keyword id="KW-0597">Phosphoprotein</keyword>
<keyword id="KW-1185">Reference proteome</keyword>
<organism>
    <name type="scientific">Schizosaccharomyces pombe (strain 972 / ATCC 24843)</name>
    <name type="common">Fission yeast</name>
    <dbReference type="NCBI Taxonomy" id="284812"/>
    <lineage>
        <taxon>Eukaryota</taxon>
        <taxon>Fungi</taxon>
        <taxon>Dikarya</taxon>
        <taxon>Ascomycota</taxon>
        <taxon>Taphrinomycotina</taxon>
        <taxon>Schizosaccharomycetes</taxon>
        <taxon>Schizosaccharomycetales</taxon>
        <taxon>Schizosaccharomycetaceae</taxon>
        <taxon>Schizosaccharomyces</taxon>
    </lineage>
</organism>
<comment type="subcellular location">
    <subcellularLocation>
        <location evidence="3">Cytoplasm</location>
    </subcellularLocation>
</comment>
<feature type="chain" id="PRO_0000372367" description="Uncharacterized protein C458.02c">
    <location>
        <begin position="1"/>
        <end position="468"/>
    </location>
</feature>
<feature type="region of interest" description="Disordered" evidence="2">
    <location>
        <begin position="324"/>
        <end position="369"/>
    </location>
</feature>
<feature type="coiled-coil region" evidence="1">
    <location>
        <begin position="10"/>
        <end position="94"/>
    </location>
</feature>
<feature type="coiled-coil region" evidence="1">
    <location>
        <begin position="147"/>
        <end position="279"/>
    </location>
</feature>
<feature type="coiled-coil region" evidence="1">
    <location>
        <begin position="399"/>
        <end position="445"/>
    </location>
</feature>
<feature type="modified residue" description="Phosphoserine" evidence="4">
    <location>
        <position position="342"/>
    </location>
</feature>